<protein>
    <recommendedName>
        <fullName evidence="1">Ribosomal RNA small subunit methyltransferase G</fullName>
        <ecNumber evidence="1">2.1.1.170</ecNumber>
    </recommendedName>
    <alternativeName>
        <fullName evidence="1">16S rRNA 7-methylguanosine methyltransferase</fullName>
        <shortName evidence="1">16S rRNA m7G methyltransferase</shortName>
    </alternativeName>
</protein>
<accession>B1M187</accession>
<keyword id="KW-0963">Cytoplasm</keyword>
<keyword id="KW-0489">Methyltransferase</keyword>
<keyword id="KW-0698">rRNA processing</keyword>
<keyword id="KW-0949">S-adenosyl-L-methionine</keyword>
<keyword id="KW-0808">Transferase</keyword>
<organism>
    <name type="scientific">Methylobacterium radiotolerans (strain ATCC 27329 / DSM 1819 / JCM 2831 / NBRC 15690 / NCIMB 10815 / 0-1)</name>
    <dbReference type="NCBI Taxonomy" id="426355"/>
    <lineage>
        <taxon>Bacteria</taxon>
        <taxon>Pseudomonadati</taxon>
        <taxon>Pseudomonadota</taxon>
        <taxon>Alphaproteobacteria</taxon>
        <taxon>Hyphomicrobiales</taxon>
        <taxon>Methylobacteriaceae</taxon>
        <taxon>Methylobacterium</taxon>
    </lineage>
</organism>
<evidence type="ECO:0000255" key="1">
    <source>
        <dbReference type="HAMAP-Rule" id="MF_00074"/>
    </source>
</evidence>
<comment type="function">
    <text evidence="1">Specifically methylates the N7 position of guanine in position 527 of 16S rRNA.</text>
</comment>
<comment type="catalytic activity">
    <reaction evidence="1">
        <text>guanosine(527) in 16S rRNA + S-adenosyl-L-methionine = N(7)-methylguanosine(527) in 16S rRNA + S-adenosyl-L-homocysteine</text>
        <dbReference type="Rhea" id="RHEA:42732"/>
        <dbReference type="Rhea" id="RHEA-COMP:10209"/>
        <dbReference type="Rhea" id="RHEA-COMP:10210"/>
        <dbReference type="ChEBI" id="CHEBI:57856"/>
        <dbReference type="ChEBI" id="CHEBI:59789"/>
        <dbReference type="ChEBI" id="CHEBI:74269"/>
        <dbReference type="ChEBI" id="CHEBI:74480"/>
        <dbReference type="EC" id="2.1.1.170"/>
    </reaction>
</comment>
<comment type="subcellular location">
    <subcellularLocation>
        <location evidence="1">Cytoplasm</location>
    </subcellularLocation>
</comment>
<comment type="similarity">
    <text evidence="1">Belongs to the methyltransferase superfamily. RNA methyltransferase RsmG family.</text>
</comment>
<gene>
    <name evidence="1" type="primary">rsmG</name>
    <name type="ordered locus">Mrad2831_4092</name>
</gene>
<name>RSMG_METRJ</name>
<dbReference type="EC" id="2.1.1.170" evidence="1"/>
<dbReference type="EMBL" id="CP001001">
    <property type="protein sequence ID" value="ACB26062.1"/>
    <property type="molecule type" value="Genomic_DNA"/>
</dbReference>
<dbReference type="RefSeq" id="WP_012321018.1">
    <property type="nucleotide sequence ID" value="NC_010505.1"/>
</dbReference>
<dbReference type="SMR" id="B1M187"/>
<dbReference type="STRING" id="426355.Mrad2831_4092"/>
<dbReference type="GeneID" id="6140150"/>
<dbReference type="KEGG" id="mrd:Mrad2831_4092"/>
<dbReference type="eggNOG" id="COG0357">
    <property type="taxonomic scope" value="Bacteria"/>
</dbReference>
<dbReference type="HOGENOM" id="CLU_065341_1_1_5"/>
<dbReference type="OrthoDB" id="9808773at2"/>
<dbReference type="Proteomes" id="UP000006589">
    <property type="component" value="Chromosome"/>
</dbReference>
<dbReference type="GO" id="GO:0005829">
    <property type="term" value="C:cytosol"/>
    <property type="evidence" value="ECO:0007669"/>
    <property type="project" value="TreeGrafter"/>
</dbReference>
<dbReference type="GO" id="GO:0070043">
    <property type="term" value="F:rRNA (guanine-N7-)-methyltransferase activity"/>
    <property type="evidence" value="ECO:0007669"/>
    <property type="project" value="UniProtKB-UniRule"/>
</dbReference>
<dbReference type="Gene3D" id="3.40.50.150">
    <property type="entry name" value="Vaccinia Virus protein VP39"/>
    <property type="match status" value="1"/>
</dbReference>
<dbReference type="HAMAP" id="MF_00074">
    <property type="entry name" value="16SrRNA_methyltr_G"/>
    <property type="match status" value="1"/>
</dbReference>
<dbReference type="InterPro" id="IPR003682">
    <property type="entry name" value="rRNA_ssu_MeTfrase_G"/>
</dbReference>
<dbReference type="InterPro" id="IPR029063">
    <property type="entry name" value="SAM-dependent_MTases_sf"/>
</dbReference>
<dbReference type="NCBIfam" id="TIGR00138">
    <property type="entry name" value="rsmG_gidB"/>
    <property type="match status" value="1"/>
</dbReference>
<dbReference type="PANTHER" id="PTHR31760">
    <property type="entry name" value="S-ADENOSYL-L-METHIONINE-DEPENDENT METHYLTRANSFERASES SUPERFAMILY PROTEIN"/>
    <property type="match status" value="1"/>
</dbReference>
<dbReference type="PANTHER" id="PTHR31760:SF0">
    <property type="entry name" value="S-ADENOSYL-L-METHIONINE-DEPENDENT METHYLTRANSFERASES SUPERFAMILY PROTEIN"/>
    <property type="match status" value="1"/>
</dbReference>
<dbReference type="Pfam" id="PF02527">
    <property type="entry name" value="GidB"/>
    <property type="match status" value="1"/>
</dbReference>
<dbReference type="PIRSF" id="PIRSF003078">
    <property type="entry name" value="GidB"/>
    <property type="match status" value="1"/>
</dbReference>
<dbReference type="SUPFAM" id="SSF53335">
    <property type="entry name" value="S-adenosyl-L-methionine-dependent methyltransferases"/>
    <property type="match status" value="1"/>
</dbReference>
<feature type="chain" id="PRO_0000342925" description="Ribosomal RNA small subunit methyltransferase G">
    <location>
        <begin position="1"/>
        <end position="211"/>
    </location>
</feature>
<feature type="binding site" evidence="1">
    <location>
        <position position="73"/>
    </location>
    <ligand>
        <name>S-adenosyl-L-methionine</name>
        <dbReference type="ChEBI" id="CHEBI:59789"/>
    </ligand>
</feature>
<feature type="binding site" evidence="1">
    <location>
        <begin position="125"/>
        <end position="126"/>
    </location>
    <ligand>
        <name>S-adenosyl-L-methionine</name>
        <dbReference type="ChEBI" id="CHEBI:59789"/>
    </ligand>
</feature>
<feature type="binding site" evidence="1">
    <location>
        <position position="141"/>
    </location>
    <ligand>
        <name>S-adenosyl-L-methionine</name>
        <dbReference type="ChEBI" id="CHEBI:59789"/>
    </ligand>
</feature>
<proteinExistence type="inferred from homology"/>
<reference key="1">
    <citation type="submission" date="2008-03" db="EMBL/GenBank/DDBJ databases">
        <title>Complete sequence of chromosome of Methylobacterium radiotolerans JCM 2831.</title>
        <authorList>
            <consortium name="US DOE Joint Genome Institute"/>
            <person name="Copeland A."/>
            <person name="Lucas S."/>
            <person name="Lapidus A."/>
            <person name="Glavina del Rio T."/>
            <person name="Dalin E."/>
            <person name="Tice H."/>
            <person name="Bruce D."/>
            <person name="Goodwin L."/>
            <person name="Pitluck S."/>
            <person name="Kiss H."/>
            <person name="Brettin T."/>
            <person name="Detter J.C."/>
            <person name="Han C."/>
            <person name="Kuske C.R."/>
            <person name="Schmutz J."/>
            <person name="Larimer F."/>
            <person name="Land M."/>
            <person name="Hauser L."/>
            <person name="Kyrpides N."/>
            <person name="Mikhailova N."/>
            <person name="Marx C.J."/>
            <person name="Richardson P."/>
        </authorList>
    </citation>
    <scope>NUCLEOTIDE SEQUENCE [LARGE SCALE GENOMIC DNA]</scope>
    <source>
        <strain>ATCC 27329 / DSM 1819 / JCM 2831 / NBRC 15690 / NCIMB 10815 / 0-1</strain>
    </source>
</reference>
<sequence length="211" mass="22904">MSDPDRARVLAAAGVSRETAERLDLYVAQLRRWQPIKNLVGPATLTEVWSRHIDDALQLLDLAPEARTWLDLGSGAGIPGLILAIAGRERGVRVDLVESNARKCAFLTETARLTEAPARVRNARIEAVIGEYGGTDVVCARALAPMTQLLAWTEPLLKTGTTGLFPKGRDVQAELTQAGAQWRVVNDLVPSRTDSEARIVRVTALAAPSHR</sequence>